<sequence length="20" mass="2224">NLYQFGNMIQCTIPGSNPLL</sequence>
<name>PA2D5_MICPY</name>
<reference key="1">
    <citation type="journal article" date="2009" name="Toxicon">
        <title>Biochemical characterization of the Micrurus pyrrhocryptus venom.</title>
        <authorList>
            <person name="Dokmetjian J.C."/>
            <person name="Del Canto S."/>
            <person name="Vinzon S."/>
            <person name="de Jimenez Bonino M.B."/>
        </authorList>
    </citation>
    <scope>PROTEIN SEQUENCE</scope>
    <scope>MASS SPECTROMETRY</scope>
    <source>
        <tissue>Venom</tissue>
    </source>
</reference>
<accession>P0CAT0</accession>
<proteinExistence type="evidence at protein level"/>
<protein>
    <recommendedName>
        <fullName>Phospholipase A2 D5</fullName>
        <shortName>svPLA2</shortName>
        <ecNumber>3.1.1.4</ecNumber>
    </recommendedName>
    <alternativeName>
        <fullName>Phosphatidylcholine 2-acylhydrolase</fullName>
    </alternativeName>
</protein>
<feature type="chain" id="PRO_0000376927" description="Phospholipase A2 D5">
    <location>
        <begin position="1"/>
        <end position="20" status="greater than"/>
    </location>
</feature>
<feature type="non-terminal residue">
    <location>
        <position position="20"/>
    </location>
</feature>
<organism>
    <name type="scientific">Micrurus pyrrhocryptus</name>
    <name type="common">Coral snake</name>
    <dbReference type="NCBI Taxonomy" id="129468"/>
    <lineage>
        <taxon>Eukaryota</taxon>
        <taxon>Metazoa</taxon>
        <taxon>Chordata</taxon>
        <taxon>Craniata</taxon>
        <taxon>Vertebrata</taxon>
        <taxon>Euteleostomi</taxon>
        <taxon>Lepidosauria</taxon>
        <taxon>Squamata</taxon>
        <taxon>Bifurcata</taxon>
        <taxon>Unidentata</taxon>
        <taxon>Episquamata</taxon>
        <taxon>Toxicofera</taxon>
        <taxon>Serpentes</taxon>
        <taxon>Colubroidea</taxon>
        <taxon>Elapidae</taxon>
        <taxon>Elapinae</taxon>
        <taxon>Micrurus</taxon>
    </lineage>
</organism>
<dbReference type="EC" id="3.1.1.4"/>
<dbReference type="GO" id="GO:0005576">
    <property type="term" value="C:extracellular region"/>
    <property type="evidence" value="ECO:0007669"/>
    <property type="project" value="UniProtKB-SubCell"/>
</dbReference>
<dbReference type="GO" id="GO:0046872">
    <property type="term" value="F:metal ion binding"/>
    <property type="evidence" value="ECO:0007669"/>
    <property type="project" value="UniProtKB-KW"/>
</dbReference>
<dbReference type="GO" id="GO:0004623">
    <property type="term" value="F:phospholipase A2 activity"/>
    <property type="evidence" value="ECO:0007669"/>
    <property type="project" value="UniProtKB-EC"/>
</dbReference>
<dbReference type="GO" id="GO:0016042">
    <property type="term" value="P:lipid catabolic process"/>
    <property type="evidence" value="ECO:0007669"/>
    <property type="project" value="UniProtKB-KW"/>
</dbReference>
<comment type="function">
    <text>PLA2 catalyzes the calcium-dependent hydrolysis of the 2-acyl groups in 3-sn-phosphoglycerides.</text>
</comment>
<comment type="catalytic activity">
    <reaction evidence="2 3">
        <text>a 1,2-diacyl-sn-glycero-3-phosphocholine + H2O = a 1-acyl-sn-glycero-3-phosphocholine + a fatty acid + H(+)</text>
        <dbReference type="Rhea" id="RHEA:15801"/>
        <dbReference type="ChEBI" id="CHEBI:15377"/>
        <dbReference type="ChEBI" id="CHEBI:15378"/>
        <dbReference type="ChEBI" id="CHEBI:28868"/>
        <dbReference type="ChEBI" id="CHEBI:57643"/>
        <dbReference type="ChEBI" id="CHEBI:58168"/>
        <dbReference type="EC" id="3.1.1.4"/>
    </reaction>
</comment>
<comment type="cofactor">
    <cofactor evidence="1">
        <name>Ca(2+)</name>
        <dbReference type="ChEBI" id="CHEBI:29108"/>
    </cofactor>
    <text evidence="1">Binds 1 Ca(2+) ion.</text>
</comment>
<comment type="subcellular location">
    <subcellularLocation>
        <location>Secreted</location>
    </subcellularLocation>
</comment>
<comment type="tissue specificity">
    <text>Expressed by the venom gland.</text>
</comment>
<comment type="PTM">
    <text evidence="1">Contains seven disulfide bonds.</text>
</comment>
<comment type="mass spectrometry" mass="12860.0" method="Electrospray" evidence="4"/>
<comment type="similarity">
    <text evidence="5">Belongs to the phospholipase A2 family. Group I subfamily.</text>
</comment>
<keyword id="KW-0106">Calcium</keyword>
<keyword id="KW-0903">Direct protein sequencing</keyword>
<keyword id="KW-1015">Disulfide bond</keyword>
<keyword id="KW-0378">Hydrolase</keyword>
<keyword id="KW-0442">Lipid degradation</keyword>
<keyword id="KW-0443">Lipid metabolism</keyword>
<keyword id="KW-0479">Metal-binding</keyword>
<keyword id="KW-0964">Secreted</keyword>
<evidence type="ECO:0000250" key="1"/>
<evidence type="ECO:0000255" key="2">
    <source>
        <dbReference type="PROSITE-ProRule" id="PRU10035"/>
    </source>
</evidence>
<evidence type="ECO:0000255" key="3">
    <source>
        <dbReference type="PROSITE-ProRule" id="PRU10036"/>
    </source>
</evidence>
<evidence type="ECO:0000269" key="4">
    <source>
    </source>
</evidence>
<evidence type="ECO:0000305" key="5"/>